<organism>
    <name type="scientific">Saccharomyces cerevisiae (strain YJM789)</name>
    <name type="common">Baker's yeast</name>
    <dbReference type="NCBI Taxonomy" id="307796"/>
    <lineage>
        <taxon>Eukaryota</taxon>
        <taxon>Fungi</taxon>
        <taxon>Dikarya</taxon>
        <taxon>Ascomycota</taxon>
        <taxon>Saccharomycotina</taxon>
        <taxon>Saccharomycetes</taxon>
        <taxon>Saccharomycetales</taxon>
        <taxon>Saccharomycetaceae</taxon>
        <taxon>Saccharomyces</taxon>
    </lineage>
</organism>
<comment type="function">
    <text evidence="1">Component of the spindle pole body (SPB) required for insertion of the nascent SPB into the nuclear envelope and for the proper execution of spindle pole body (SPB) duplication. Connects the central plaque of the SPB with the half-bridge. Required for proper localization of CDC5 at the SPB and for proper M-phase progression (By similarity).</text>
</comment>
<comment type="subunit">
    <text evidence="1">Homodimer. Interacts with KAR1, MPS2 and SPC29.</text>
</comment>
<comment type="subcellular location">
    <subcellularLocation>
        <location evidence="1">Cytoplasm</location>
        <location evidence="1">Cytoskeleton</location>
        <location evidence="1">Microtubule organizing center</location>
        <location evidence="1">Spindle pole body</location>
    </subcellularLocation>
    <text evidence="1">Associates with the periphary of the central plaque.</text>
</comment>
<comment type="similarity">
    <text evidence="5">Belongs to the BBP1 family.</text>
</comment>
<evidence type="ECO:0000250" key="1"/>
<evidence type="ECO:0000250" key="2">
    <source>
        <dbReference type="UniProtKB" id="Q12365"/>
    </source>
</evidence>
<evidence type="ECO:0000255" key="3"/>
<evidence type="ECO:0000256" key="4">
    <source>
        <dbReference type="SAM" id="MobiDB-lite"/>
    </source>
</evidence>
<evidence type="ECO:0000305" key="5"/>
<dbReference type="EMBL" id="AAFW02000135">
    <property type="protein sequence ID" value="EDN60893.1"/>
    <property type="molecule type" value="Genomic_DNA"/>
</dbReference>
<dbReference type="SMR" id="A6ZW01"/>
<dbReference type="HOGENOM" id="CLU_711875_0_0_1"/>
<dbReference type="OrthoDB" id="14223at4893"/>
<dbReference type="Proteomes" id="UP000007060">
    <property type="component" value="Unassembled WGS sequence"/>
</dbReference>
<dbReference type="GO" id="GO:0005737">
    <property type="term" value="C:cytoplasm"/>
    <property type="evidence" value="ECO:0007669"/>
    <property type="project" value="UniProtKB-KW"/>
</dbReference>
<dbReference type="GO" id="GO:0005816">
    <property type="term" value="C:spindle pole body"/>
    <property type="evidence" value="ECO:0007669"/>
    <property type="project" value="UniProtKB-SubCell"/>
</dbReference>
<dbReference type="InterPro" id="IPR029330">
    <property type="entry name" value="Bbp1_C"/>
</dbReference>
<dbReference type="InterPro" id="IPR029328">
    <property type="entry name" value="Bbp1_N"/>
</dbReference>
<dbReference type="Pfam" id="PF15272">
    <property type="entry name" value="BBP1_C"/>
    <property type="match status" value="1"/>
</dbReference>
<dbReference type="Pfam" id="PF15271">
    <property type="entry name" value="BBP1_N"/>
    <property type="match status" value="1"/>
</dbReference>
<keyword id="KW-0175">Coiled coil</keyword>
<keyword id="KW-0963">Cytoplasm</keyword>
<keyword id="KW-0206">Cytoskeleton</keyword>
<keyword id="KW-0597">Phosphoprotein</keyword>
<accession>A6ZW01</accession>
<sequence length="419" mass="49480">MNQEDNTGGGGIFGLFKWTKDALFGTDISPSMKYKDQEERRDRSRYAQDDTNFSMKFGNDSNRRSTNLSRSNSWSGLDSTLHRKYELLPEYNENGFNSIVNGDHHSKERIRSLRSPAPIVPREPLRNEPTDTFGHRLHTKRRTINELSNSQIPFIPPQEDDPLLSKFFNKDGVNEVRRSPYKLSVKDIPGKFPSPLTKRDEIDNYYVRDEDACHKNREYKKAYFDLFAQMDLNSRDLEDLCEDVREQREQFHRNEQTYKQAYEEMRAELVNELKKSKTLFENYYSLGQKYKSLKKVLDQTISHEAELATSRERLYQEEDLKNFEIQTLKQRLSDLELKYTNLQIEKDMQRDNYESEIHDLLLQLSLRNNERKDTSAGSNIFSTGQYDRTPFHNGNNSYDSNSHSWDTDYLKNIDGFIER</sequence>
<feature type="chain" id="PRO_0000409178" description="Spindle pole component BBP1">
    <location>
        <begin position="1"/>
        <end position="419"/>
    </location>
</feature>
<feature type="region of interest" description="Disordered" evidence="4">
    <location>
        <begin position="34"/>
        <end position="76"/>
    </location>
</feature>
<feature type="coiled-coil region" evidence="3">
    <location>
        <begin position="229"/>
        <end position="355"/>
    </location>
</feature>
<feature type="compositionally biased region" description="Basic and acidic residues" evidence="4">
    <location>
        <begin position="34"/>
        <end position="48"/>
    </location>
</feature>
<feature type="compositionally biased region" description="Low complexity" evidence="4">
    <location>
        <begin position="64"/>
        <end position="75"/>
    </location>
</feature>
<feature type="modified residue" description="Phosphoserine" evidence="2">
    <location>
        <position position="29"/>
    </location>
</feature>
<feature type="modified residue" description="Phosphoserine" evidence="2">
    <location>
        <position position="73"/>
    </location>
</feature>
<feature type="modified residue" description="Phosphoserine" evidence="2">
    <location>
        <position position="115"/>
    </location>
</feature>
<name>BBP1_YEAS7</name>
<gene>
    <name type="primary">BBP1</name>
    <name type="ORF">SCY_5478</name>
</gene>
<proteinExistence type="inferred from homology"/>
<protein>
    <recommendedName>
        <fullName>Spindle pole component BBP1</fullName>
    </recommendedName>
    <alternativeName>
        <fullName>BFR1-binding protein 1</fullName>
    </alternativeName>
</protein>
<reference key="1">
    <citation type="journal article" date="2007" name="Proc. Natl. Acad. Sci. U.S.A.">
        <title>Genome sequencing and comparative analysis of Saccharomyces cerevisiae strain YJM789.</title>
        <authorList>
            <person name="Wei W."/>
            <person name="McCusker J.H."/>
            <person name="Hyman R.W."/>
            <person name="Jones T."/>
            <person name="Ning Y."/>
            <person name="Cao Z."/>
            <person name="Gu Z."/>
            <person name="Bruno D."/>
            <person name="Miranda M."/>
            <person name="Nguyen M."/>
            <person name="Wilhelmy J."/>
            <person name="Komp C."/>
            <person name="Tamse R."/>
            <person name="Wang X."/>
            <person name="Jia P."/>
            <person name="Luedi P."/>
            <person name="Oefner P.J."/>
            <person name="David L."/>
            <person name="Dietrich F.S."/>
            <person name="Li Y."/>
            <person name="Davis R.W."/>
            <person name="Steinmetz L.M."/>
        </authorList>
    </citation>
    <scope>NUCLEOTIDE SEQUENCE [LARGE SCALE GENOMIC DNA]</scope>
    <source>
        <strain>YJM789</strain>
    </source>
</reference>